<name>RBL_METCA</name>
<gene>
    <name evidence="1" type="primary">cbbL</name>
    <name type="ordered locus">MCA2743</name>
</gene>
<proteinExistence type="evidence at transcript level"/>
<keyword id="KW-0113">Calvin cycle</keyword>
<keyword id="KW-0120">Carbon dioxide fixation</keyword>
<keyword id="KW-0456">Lyase</keyword>
<keyword id="KW-0460">Magnesium</keyword>
<keyword id="KW-0479">Metal-binding</keyword>
<keyword id="KW-0503">Monooxygenase</keyword>
<keyword id="KW-0560">Oxidoreductase</keyword>
<keyword id="KW-1185">Reference proteome</keyword>
<accession>Q603Q7</accession>
<accession>Q8VR29</accession>
<feature type="chain" id="PRO_0000062628" description="Ribulose bisphosphate carboxylase large chain">
    <location>
        <begin position="1"/>
        <end position="473"/>
    </location>
</feature>
<feature type="active site" description="Proton acceptor" evidence="1">
    <location>
        <position position="168"/>
    </location>
</feature>
<feature type="active site" description="Proton acceptor" evidence="1">
    <location>
        <position position="287"/>
    </location>
</feature>
<feature type="binding site" description="in homodimeric partner" evidence="1">
    <location>
        <position position="116"/>
    </location>
    <ligand>
        <name>substrate</name>
    </ligand>
</feature>
<feature type="binding site" evidence="1">
    <location>
        <position position="166"/>
    </location>
    <ligand>
        <name>substrate</name>
    </ligand>
</feature>
<feature type="binding site" evidence="1">
    <location>
        <position position="170"/>
    </location>
    <ligand>
        <name>substrate</name>
    </ligand>
</feature>
<feature type="binding site" description="via carbamate group" evidence="1">
    <location>
        <position position="194"/>
    </location>
    <ligand>
        <name>Mg(2+)</name>
        <dbReference type="ChEBI" id="CHEBI:18420"/>
    </ligand>
</feature>
<feature type="binding site" evidence="1">
    <location>
        <position position="196"/>
    </location>
    <ligand>
        <name>Mg(2+)</name>
        <dbReference type="ChEBI" id="CHEBI:18420"/>
    </ligand>
</feature>
<feature type="binding site" evidence="1">
    <location>
        <position position="197"/>
    </location>
    <ligand>
        <name>Mg(2+)</name>
        <dbReference type="ChEBI" id="CHEBI:18420"/>
    </ligand>
</feature>
<feature type="binding site" evidence="1">
    <location>
        <position position="288"/>
    </location>
    <ligand>
        <name>substrate</name>
    </ligand>
</feature>
<feature type="binding site" evidence="1">
    <location>
        <position position="320"/>
    </location>
    <ligand>
        <name>substrate</name>
    </ligand>
</feature>
<feature type="binding site" evidence="1">
    <location>
        <position position="372"/>
    </location>
    <ligand>
        <name>substrate</name>
    </ligand>
</feature>
<feature type="site" description="Transition state stabilizer" evidence="1">
    <location>
        <position position="327"/>
    </location>
</feature>
<feature type="modified residue" description="N6-carboxylysine" evidence="1">
    <location>
        <position position="194"/>
    </location>
</feature>
<feature type="sequence conflict" description="In Ref. 1; AAL40972." evidence="2" ref="1">
    <original>S</original>
    <variation>F</variation>
    <location>
        <position position="372"/>
    </location>
</feature>
<sequence>MAVKTYNAGVKEYRETYWDPNYTPADTDLLAVFKITPQPGVPREEAAAAVAAESSTGTWTTVWTDLLTDLDYYKGRAYRIEDVPGQDEQFYAFIAYPIDLFEEGSVVNVFTSLVGNVFGFKAVRGLRLEDVRFPLAYVMTCGGPPHGIQVERDIMNKYGRPLLGCTIKPKLGLSAKNYGRAVYECLRGGLDFTKDDENVNSQPFMRWRQRFDFVMEAIEKAEAETGERKGHYLNVTAPTPEEMYKRAEYAKEIGAPIIMHDFITGGFCANTGLANWCRNNGMLLHIHRAMHAVMDRNPNHGIHFRVFTKMLRLSGGDHLHTGTVVGKLEGDRQATLGWIDLLRERSIKEDRSRGIFFDQEWGAMPGVFAVASGGIHVWHMPALLSIFGDDAVFQFGGGTLGHPWGNAAGAAANRVALEACVEARNEGRQLEKEGKEILTEAAKSSPELKAAMETWKEIKFEFDTVDKLDVAHR</sequence>
<comment type="function">
    <text>RuBisCO catalyzes two reactions: the carboxylation of D-ribulose 1,5-bisphosphate, the primary event in carbon dioxide fixation, as well as the oxidative fragmentation of the pentose substrate. Both reactions occur simultaneously and in competition at the same active site.</text>
</comment>
<comment type="catalytic activity">
    <reaction evidence="1">
        <text>2 (2R)-3-phosphoglycerate + 2 H(+) = D-ribulose 1,5-bisphosphate + CO2 + H2O</text>
        <dbReference type="Rhea" id="RHEA:23124"/>
        <dbReference type="ChEBI" id="CHEBI:15377"/>
        <dbReference type="ChEBI" id="CHEBI:15378"/>
        <dbReference type="ChEBI" id="CHEBI:16526"/>
        <dbReference type="ChEBI" id="CHEBI:57870"/>
        <dbReference type="ChEBI" id="CHEBI:58272"/>
        <dbReference type="EC" id="4.1.1.39"/>
    </reaction>
</comment>
<comment type="catalytic activity">
    <reaction evidence="1">
        <text>D-ribulose 1,5-bisphosphate + O2 = 2-phosphoglycolate + (2R)-3-phosphoglycerate + 2 H(+)</text>
        <dbReference type="Rhea" id="RHEA:36631"/>
        <dbReference type="ChEBI" id="CHEBI:15378"/>
        <dbReference type="ChEBI" id="CHEBI:15379"/>
        <dbReference type="ChEBI" id="CHEBI:57870"/>
        <dbReference type="ChEBI" id="CHEBI:58033"/>
        <dbReference type="ChEBI" id="CHEBI:58272"/>
    </reaction>
</comment>
<comment type="cofactor">
    <cofactor evidence="1">
        <name>Mg(2+)</name>
        <dbReference type="ChEBI" id="CHEBI:18420"/>
    </cofactor>
    <text evidence="1">Binds 1 Mg(2+) ion per subunit.</text>
</comment>
<comment type="subunit">
    <text evidence="1">Heterohexadecamer of 8 large chains and 8 small chains.</text>
</comment>
<comment type="induction">
    <text>Expressed under both copper-replete and copper-limited growth conditions.</text>
</comment>
<comment type="miscellaneous">
    <text evidence="1">The basic functional RuBisCO is composed of a large chain homodimer in a 'head-to-tail' conformation. In form I RuBisCO this homodimer is arranged in a barrel-like tetramer with the small subunits forming a tetrameric 'cap' on each end of the 'barrel'.</text>
</comment>
<comment type="similarity">
    <text evidence="1">Belongs to the RuBisCO large chain family. Type I subfamily.</text>
</comment>
<reference key="1">
    <citation type="journal article" date="2002" name="Arch. Microbiol.">
        <title>The ribulose-1,5-bisphosphate carboxylase/oxygenase gene cluster of Methylococcus capsulatus (Bath).</title>
        <authorList>
            <person name="Baxter N.J."/>
            <person name="Hirt R.P."/>
            <person name="Bodrossy L."/>
            <person name="Kovacs K.L."/>
            <person name="Embley T.M."/>
            <person name="Prosser J.I."/>
            <person name="Murrell J.C."/>
        </authorList>
    </citation>
    <scope>NUCLEOTIDE SEQUENCE [GENOMIC DNA]</scope>
    <scope>EXPRESSION</scope>
    <source>
        <strain>ATCC 33009 / NCIMB 11132 / Bath</strain>
    </source>
</reference>
<reference key="2">
    <citation type="journal article" date="2004" name="PLoS Biol.">
        <title>Genomic insights into methanotrophy: the complete genome sequence of Methylococcus capsulatus (Bath).</title>
        <authorList>
            <person name="Ward N.L."/>
            <person name="Larsen O."/>
            <person name="Sakwa J."/>
            <person name="Bruseth L."/>
            <person name="Khouri H.M."/>
            <person name="Durkin A.S."/>
            <person name="Dimitrov G."/>
            <person name="Jiang L."/>
            <person name="Scanlan D."/>
            <person name="Kang K.H."/>
            <person name="Lewis M.R."/>
            <person name="Nelson K.E."/>
            <person name="Methe B.A."/>
            <person name="Wu M."/>
            <person name="Heidelberg J.F."/>
            <person name="Paulsen I.T."/>
            <person name="Fouts D.E."/>
            <person name="Ravel J."/>
            <person name="Tettelin H."/>
            <person name="Ren Q."/>
            <person name="Read T.D."/>
            <person name="DeBoy R.T."/>
            <person name="Seshadri R."/>
            <person name="Salzberg S.L."/>
            <person name="Jensen H.B."/>
            <person name="Birkeland N.K."/>
            <person name="Nelson W.C."/>
            <person name="Dodson R.J."/>
            <person name="Grindhaug S.H."/>
            <person name="Holt I.E."/>
            <person name="Eidhammer I."/>
            <person name="Jonasen I."/>
            <person name="Vanaken S."/>
            <person name="Utterback T.R."/>
            <person name="Feldblyum T.V."/>
            <person name="Fraser C.M."/>
            <person name="Lillehaug J.R."/>
            <person name="Eisen J.A."/>
        </authorList>
    </citation>
    <scope>NUCLEOTIDE SEQUENCE [LARGE SCALE GENOMIC DNA]</scope>
    <source>
        <strain>ATCC 33009 / NCIMB 11132 / Bath</strain>
    </source>
</reference>
<protein>
    <recommendedName>
        <fullName evidence="1">Ribulose bisphosphate carboxylase large chain</fullName>
        <shortName evidence="1">RuBisCO large subunit</shortName>
        <ecNumber evidence="1">4.1.1.39</ecNumber>
    </recommendedName>
</protein>
<organism>
    <name type="scientific">Methylococcus capsulatus (strain ATCC 33009 / NCIMB 11132 / Bath)</name>
    <dbReference type="NCBI Taxonomy" id="243233"/>
    <lineage>
        <taxon>Bacteria</taxon>
        <taxon>Pseudomonadati</taxon>
        <taxon>Pseudomonadota</taxon>
        <taxon>Gammaproteobacteria</taxon>
        <taxon>Methylococcales</taxon>
        <taxon>Methylococcaceae</taxon>
        <taxon>Methylococcus</taxon>
    </lineage>
</organism>
<dbReference type="EC" id="4.1.1.39" evidence="1"/>
<dbReference type="EMBL" id="AF447860">
    <property type="protein sequence ID" value="AAL40972.1"/>
    <property type="molecule type" value="Genomic_DNA"/>
</dbReference>
<dbReference type="EMBL" id="AE017282">
    <property type="protein sequence ID" value="AAU91176.1"/>
    <property type="molecule type" value="Genomic_DNA"/>
</dbReference>
<dbReference type="RefSeq" id="WP_010961949.1">
    <property type="nucleotide sequence ID" value="NC_002977.6"/>
</dbReference>
<dbReference type="SMR" id="Q603Q7"/>
<dbReference type="STRING" id="243233.MCA2743"/>
<dbReference type="GeneID" id="88224923"/>
<dbReference type="KEGG" id="mca:MCA2743"/>
<dbReference type="eggNOG" id="COG1850">
    <property type="taxonomic scope" value="Bacteria"/>
</dbReference>
<dbReference type="HOGENOM" id="CLU_031450_2_0_6"/>
<dbReference type="Proteomes" id="UP000006821">
    <property type="component" value="Chromosome"/>
</dbReference>
<dbReference type="GO" id="GO:0000287">
    <property type="term" value="F:magnesium ion binding"/>
    <property type="evidence" value="ECO:0007669"/>
    <property type="project" value="UniProtKB-UniRule"/>
</dbReference>
<dbReference type="GO" id="GO:0004497">
    <property type="term" value="F:monooxygenase activity"/>
    <property type="evidence" value="ECO:0007669"/>
    <property type="project" value="UniProtKB-KW"/>
</dbReference>
<dbReference type="GO" id="GO:0016984">
    <property type="term" value="F:ribulose-bisphosphate carboxylase activity"/>
    <property type="evidence" value="ECO:0007669"/>
    <property type="project" value="UniProtKB-UniRule"/>
</dbReference>
<dbReference type="GO" id="GO:0019253">
    <property type="term" value="P:reductive pentose-phosphate cycle"/>
    <property type="evidence" value="ECO:0007669"/>
    <property type="project" value="UniProtKB-UniRule"/>
</dbReference>
<dbReference type="Gene3D" id="3.20.20.110">
    <property type="entry name" value="Ribulose bisphosphate carboxylase, large subunit, C-terminal domain"/>
    <property type="match status" value="1"/>
</dbReference>
<dbReference type="Gene3D" id="3.30.70.150">
    <property type="entry name" value="RuBisCO large subunit, N-terminal domain"/>
    <property type="match status" value="1"/>
</dbReference>
<dbReference type="HAMAP" id="MF_01338">
    <property type="entry name" value="RuBisCO_L_type1"/>
    <property type="match status" value="1"/>
</dbReference>
<dbReference type="InterPro" id="IPR033966">
    <property type="entry name" value="RuBisCO"/>
</dbReference>
<dbReference type="InterPro" id="IPR020878">
    <property type="entry name" value="RuBisCo_large_chain_AS"/>
</dbReference>
<dbReference type="InterPro" id="IPR000685">
    <property type="entry name" value="RuBisCO_lsu_C"/>
</dbReference>
<dbReference type="InterPro" id="IPR036376">
    <property type="entry name" value="RuBisCO_lsu_C_sf"/>
</dbReference>
<dbReference type="InterPro" id="IPR017443">
    <property type="entry name" value="RuBisCO_lsu_fd_N"/>
</dbReference>
<dbReference type="InterPro" id="IPR036422">
    <property type="entry name" value="RuBisCO_lsu_N_sf"/>
</dbReference>
<dbReference type="InterPro" id="IPR020888">
    <property type="entry name" value="RuBisCO_lsuI"/>
</dbReference>
<dbReference type="NCBIfam" id="NF003252">
    <property type="entry name" value="PRK04208.1"/>
    <property type="match status" value="1"/>
</dbReference>
<dbReference type="PANTHER" id="PTHR42704">
    <property type="entry name" value="RIBULOSE BISPHOSPHATE CARBOXYLASE"/>
    <property type="match status" value="1"/>
</dbReference>
<dbReference type="PANTHER" id="PTHR42704:SF17">
    <property type="entry name" value="RIBULOSE BISPHOSPHATE CARBOXYLASE LARGE CHAIN"/>
    <property type="match status" value="1"/>
</dbReference>
<dbReference type="Pfam" id="PF00016">
    <property type="entry name" value="RuBisCO_large"/>
    <property type="match status" value="1"/>
</dbReference>
<dbReference type="Pfam" id="PF02788">
    <property type="entry name" value="RuBisCO_large_N"/>
    <property type="match status" value="1"/>
</dbReference>
<dbReference type="SFLD" id="SFLDG01052">
    <property type="entry name" value="RuBisCO"/>
    <property type="match status" value="1"/>
</dbReference>
<dbReference type="SFLD" id="SFLDS00014">
    <property type="entry name" value="RuBisCO"/>
    <property type="match status" value="1"/>
</dbReference>
<dbReference type="SFLD" id="SFLDG00301">
    <property type="entry name" value="RuBisCO-like_proteins"/>
    <property type="match status" value="1"/>
</dbReference>
<dbReference type="SUPFAM" id="SSF51649">
    <property type="entry name" value="RuBisCo, C-terminal domain"/>
    <property type="match status" value="1"/>
</dbReference>
<dbReference type="SUPFAM" id="SSF54966">
    <property type="entry name" value="RuBisCO, large subunit, small (N-terminal) domain"/>
    <property type="match status" value="1"/>
</dbReference>
<dbReference type="PROSITE" id="PS00157">
    <property type="entry name" value="RUBISCO_LARGE"/>
    <property type="match status" value="1"/>
</dbReference>
<evidence type="ECO:0000255" key="1">
    <source>
        <dbReference type="HAMAP-Rule" id="MF_01338"/>
    </source>
</evidence>
<evidence type="ECO:0000305" key="2"/>